<accession>A2C142</accession>
<organism>
    <name type="scientific">Prochlorococcus marinus (strain NATL1A)</name>
    <dbReference type="NCBI Taxonomy" id="167555"/>
    <lineage>
        <taxon>Bacteria</taxon>
        <taxon>Bacillati</taxon>
        <taxon>Cyanobacteriota</taxon>
        <taxon>Cyanophyceae</taxon>
        <taxon>Synechococcales</taxon>
        <taxon>Prochlorococcaceae</taxon>
        <taxon>Prochlorococcus</taxon>
    </lineage>
</organism>
<protein>
    <recommendedName>
        <fullName evidence="1">1,4-alpha-glucan branching enzyme GlgB</fullName>
        <ecNumber evidence="1">2.4.1.18</ecNumber>
    </recommendedName>
    <alternativeName>
        <fullName evidence="1">1,4-alpha-D-glucan:1,4-alpha-D-glucan 6-glucosyl-transferase</fullName>
    </alternativeName>
    <alternativeName>
        <fullName evidence="1">Alpha-(1-&gt;4)-glucan branching enzyme</fullName>
    </alternativeName>
    <alternativeName>
        <fullName evidence="1">Glycogen branching enzyme</fullName>
        <shortName evidence="1">BE</shortName>
    </alternativeName>
</protein>
<proteinExistence type="inferred from homology"/>
<keyword id="KW-0119">Carbohydrate metabolism</keyword>
<keyword id="KW-0320">Glycogen biosynthesis</keyword>
<keyword id="KW-0321">Glycogen metabolism</keyword>
<keyword id="KW-0328">Glycosyltransferase</keyword>
<keyword id="KW-0808">Transferase</keyword>
<feature type="chain" id="PRO_1000044989" description="1,4-alpha-glucan branching enzyme GlgB">
    <location>
        <begin position="1"/>
        <end position="755"/>
    </location>
</feature>
<feature type="active site" description="Nucleophile" evidence="1">
    <location>
        <position position="431"/>
    </location>
</feature>
<feature type="active site" description="Proton donor" evidence="1">
    <location>
        <position position="484"/>
    </location>
</feature>
<sequence length="755" mass="87953">MTVSILLDSLKDDGQRLSECRHESPFSILGPQPFKDKWIIRIWMPEASEVELITQQTKIKLQNPNHEWIFEGVLEKDPGNDYQIKVNRGGIEHVQHDPWSFRKEWMGEIDRHLFAEGNHHHIWRKMGAHLTEINKKQGVMFCLWAPHAKSVSVIGDLNSWDGRHHPMQKRLGGIWELFIPGLSEGDLYKYEIRTEKGHCYEKADPYGFQHEVRPAKSSVISKIDSFQWNDQSWISNRDNRDPLEQPISVYEMHLGSWMHASSDDPFINSNGEHRAPVPAADMKPGSRLLTYKELANKVIPYVKERGFTHIELMPISEHPFDGSWGYQVTGWYAPTSRFGSPDEFRAFVDSCHKEGIGIILDWVPGHFPKDQHGLAYFDGSHLYEHSDPRVGEHKEWGTLIFNYSRNEVRNFLVANLIFWFDQFHIDGIRVDAVASMLYKDYLRPEGEWIPNEDGGNENFEAVRFLQQANHVLFQHFPGALSIAEESTTWSGVTKPTDMDGLGFNLKWNMGWMHDMLDYFEIDPWFRQFNQNNITFSICYNFTENFMLALSHDEVVHGKSHLLHKMPGDDWQKYANTRALLAYMWTHPGKKTIFMGMEFGQRQEWNVWDDLQWDLLNYEPHKGIQKLVDDLNNLYKREPALWRNDFDEYGFQWIDCDDNKNSVISFMRREKTDGEWLVIVANFTPQNHSNYRIGVPVDGFYEEIFNTDASQYGGSNLGNMGGKSTDLYNIHGYENSIDLCLPPLSVLVLKHKSKKN</sequence>
<dbReference type="EC" id="2.4.1.18" evidence="1"/>
<dbReference type="EMBL" id="CP000553">
    <property type="protein sequence ID" value="ABM75202.1"/>
    <property type="molecule type" value="Genomic_DNA"/>
</dbReference>
<dbReference type="RefSeq" id="WP_011823366.1">
    <property type="nucleotide sequence ID" value="NC_008819.1"/>
</dbReference>
<dbReference type="SMR" id="A2C142"/>
<dbReference type="CAZy" id="CBM48">
    <property type="family name" value="Carbohydrate-Binding Module Family 48"/>
</dbReference>
<dbReference type="CAZy" id="GH13">
    <property type="family name" value="Glycoside Hydrolase Family 13"/>
</dbReference>
<dbReference type="KEGG" id="pme:NATL1_06401"/>
<dbReference type="eggNOG" id="COG0296">
    <property type="taxonomic scope" value="Bacteria"/>
</dbReference>
<dbReference type="HOGENOM" id="CLU_004245_3_2_3"/>
<dbReference type="UniPathway" id="UPA00164"/>
<dbReference type="Proteomes" id="UP000002592">
    <property type="component" value="Chromosome"/>
</dbReference>
<dbReference type="GO" id="GO:0005829">
    <property type="term" value="C:cytosol"/>
    <property type="evidence" value="ECO:0007669"/>
    <property type="project" value="TreeGrafter"/>
</dbReference>
<dbReference type="GO" id="GO:0003844">
    <property type="term" value="F:1,4-alpha-glucan branching enzyme activity"/>
    <property type="evidence" value="ECO:0007669"/>
    <property type="project" value="UniProtKB-UniRule"/>
</dbReference>
<dbReference type="GO" id="GO:0043169">
    <property type="term" value="F:cation binding"/>
    <property type="evidence" value="ECO:0007669"/>
    <property type="project" value="InterPro"/>
</dbReference>
<dbReference type="GO" id="GO:0004553">
    <property type="term" value="F:hydrolase activity, hydrolyzing O-glycosyl compounds"/>
    <property type="evidence" value="ECO:0007669"/>
    <property type="project" value="InterPro"/>
</dbReference>
<dbReference type="GO" id="GO:0005978">
    <property type="term" value="P:glycogen biosynthetic process"/>
    <property type="evidence" value="ECO:0007669"/>
    <property type="project" value="UniProtKB-UniRule"/>
</dbReference>
<dbReference type="CDD" id="cd11322">
    <property type="entry name" value="AmyAc_Glg_BE"/>
    <property type="match status" value="1"/>
</dbReference>
<dbReference type="CDD" id="cd02855">
    <property type="entry name" value="E_set_GBE_prok_N"/>
    <property type="match status" value="1"/>
</dbReference>
<dbReference type="FunFam" id="2.60.40.10:FF:000169">
    <property type="entry name" value="1,4-alpha-glucan branching enzyme GlgB"/>
    <property type="match status" value="1"/>
</dbReference>
<dbReference type="FunFam" id="2.60.40.1180:FF:000002">
    <property type="entry name" value="1,4-alpha-glucan branching enzyme GlgB"/>
    <property type="match status" value="1"/>
</dbReference>
<dbReference type="FunFam" id="3.20.20.80:FF:000003">
    <property type="entry name" value="1,4-alpha-glucan branching enzyme GlgB"/>
    <property type="match status" value="1"/>
</dbReference>
<dbReference type="Gene3D" id="3.20.20.80">
    <property type="entry name" value="Glycosidases"/>
    <property type="match status" value="1"/>
</dbReference>
<dbReference type="Gene3D" id="2.60.40.1180">
    <property type="entry name" value="Golgi alpha-mannosidase II"/>
    <property type="match status" value="1"/>
</dbReference>
<dbReference type="Gene3D" id="2.60.40.10">
    <property type="entry name" value="Immunoglobulins"/>
    <property type="match status" value="2"/>
</dbReference>
<dbReference type="HAMAP" id="MF_00685">
    <property type="entry name" value="GlgB"/>
    <property type="match status" value="1"/>
</dbReference>
<dbReference type="InterPro" id="IPR006048">
    <property type="entry name" value="A-amylase/branching_C"/>
</dbReference>
<dbReference type="InterPro" id="IPR037439">
    <property type="entry name" value="Branching_enzy"/>
</dbReference>
<dbReference type="InterPro" id="IPR006407">
    <property type="entry name" value="GlgB"/>
</dbReference>
<dbReference type="InterPro" id="IPR054169">
    <property type="entry name" value="GlgB_N"/>
</dbReference>
<dbReference type="InterPro" id="IPR044143">
    <property type="entry name" value="GlgB_N_E_set_prok"/>
</dbReference>
<dbReference type="InterPro" id="IPR006047">
    <property type="entry name" value="Glyco_hydro_13_cat_dom"/>
</dbReference>
<dbReference type="InterPro" id="IPR004193">
    <property type="entry name" value="Glyco_hydro_13_N"/>
</dbReference>
<dbReference type="InterPro" id="IPR013780">
    <property type="entry name" value="Glyco_hydro_b"/>
</dbReference>
<dbReference type="InterPro" id="IPR017853">
    <property type="entry name" value="Glycoside_hydrolase_SF"/>
</dbReference>
<dbReference type="InterPro" id="IPR013783">
    <property type="entry name" value="Ig-like_fold"/>
</dbReference>
<dbReference type="InterPro" id="IPR014756">
    <property type="entry name" value="Ig_E-set"/>
</dbReference>
<dbReference type="NCBIfam" id="TIGR01515">
    <property type="entry name" value="branching_enzym"/>
    <property type="match status" value="1"/>
</dbReference>
<dbReference type="NCBIfam" id="NF003811">
    <property type="entry name" value="PRK05402.1"/>
    <property type="match status" value="1"/>
</dbReference>
<dbReference type="NCBIfam" id="NF008967">
    <property type="entry name" value="PRK12313.1"/>
    <property type="match status" value="1"/>
</dbReference>
<dbReference type="PANTHER" id="PTHR43651">
    <property type="entry name" value="1,4-ALPHA-GLUCAN-BRANCHING ENZYME"/>
    <property type="match status" value="1"/>
</dbReference>
<dbReference type="PANTHER" id="PTHR43651:SF3">
    <property type="entry name" value="1,4-ALPHA-GLUCAN-BRANCHING ENZYME"/>
    <property type="match status" value="1"/>
</dbReference>
<dbReference type="Pfam" id="PF00128">
    <property type="entry name" value="Alpha-amylase"/>
    <property type="match status" value="2"/>
</dbReference>
<dbReference type="Pfam" id="PF02806">
    <property type="entry name" value="Alpha-amylase_C"/>
    <property type="match status" value="1"/>
</dbReference>
<dbReference type="Pfam" id="PF02922">
    <property type="entry name" value="CBM_48"/>
    <property type="match status" value="1"/>
</dbReference>
<dbReference type="Pfam" id="PF22019">
    <property type="entry name" value="GlgB_N"/>
    <property type="match status" value="1"/>
</dbReference>
<dbReference type="PIRSF" id="PIRSF000463">
    <property type="entry name" value="GlgB"/>
    <property type="match status" value="1"/>
</dbReference>
<dbReference type="SMART" id="SM00642">
    <property type="entry name" value="Aamy"/>
    <property type="match status" value="1"/>
</dbReference>
<dbReference type="SUPFAM" id="SSF51445">
    <property type="entry name" value="(Trans)glycosidases"/>
    <property type="match status" value="1"/>
</dbReference>
<dbReference type="SUPFAM" id="SSF81296">
    <property type="entry name" value="E set domains"/>
    <property type="match status" value="2"/>
</dbReference>
<dbReference type="SUPFAM" id="SSF51011">
    <property type="entry name" value="Glycosyl hydrolase domain"/>
    <property type="match status" value="1"/>
</dbReference>
<gene>
    <name evidence="1" type="primary">glgB</name>
    <name type="ordered locus">NATL1_06401</name>
</gene>
<reference key="1">
    <citation type="journal article" date="2007" name="PLoS Genet.">
        <title>Patterns and implications of gene gain and loss in the evolution of Prochlorococcus.</title>
        <authorList>
            <person name="Kettler G.C."/>
            <person name="Martiny A.C."/>
            <person name="Huang K."/>
            <person name="Zucker J."/>
            <person name="Coleman M.L."/>
            <person name="Rodrigue S."/>
            <person name="Chen F."/>
            <person name="Lapidus A."/>
            <person name="Ferriera S."/>
            <person name="Johnson J."/>
            <person name="Steglich C."/>
            <person name="Church G.M."/>
            <person name="Richardson P."/>
            <person name="Chisholm S.W."/>
        </authorList>
    </citation>
    <scope>NUCLEOTIDE SEQUENCE [LARGE SCALE GENOMIC DNA]</scope>
    <source>
        <strain>NATL1A</strain>
    </source>
</reference>
<name>GLGB_PROM1</name>
<evidence type="ECO:0000255" key="1">
    <source>
        <dbReference type="HAMAP-Rule" id="MF_00685"/>
    </source>
</evidence>
<comment type="function">
    <text evidence="1">Catalyzes the formation of the alpha-1,6-glucosidic linkages in glycogen by scission of a 1,4-alpha-linked oligosaccharide from growing alpha-1,4-glucan chains and the subsequent attachment of the oligosaccharide to the alpha-1,6 position.</text>
</comment>
<comment type="catalytic activity">
    <reaction evidence="1">
        <text>Transfers a segment of a (1-&gt;4)-alpha-D-glucan chain to a primary hydroxy group in a similar glucan chain.</text>
        <dbReference type="EC" id="2.4.1.18"/>
    </reaction>
</comment>
<comment type="pathway">
    <text evidence="1">Glycan biosynthesis; glycogen biosynthesis.</text>
</comment>
<comment type="subunit">
    <text evidence="1">Monomer.</text>
</comment>
<comment type="similarity">
    <text evidence="1">Belongs to the glycosyl hydrolase 13 family. GlgB subfamily.</text>
</comment>